<accession>Q21RV7</accession>
<dbReference type="EMBL" id="CP000267">
    <property type="protein sequence ID" value="ABD71496.1"/>
    <property type="molecule type" value="Genomic_DNA"/>
</dbReference>
<dbReference type="RefSeq" id="WP_011466059.1">
    <property type="nucleotide sequence ID" value="NC_007908.1"/>
</dbReference>
<dbReference type="SMR" id="Q21RV7"/>
<dbReference type="STRING" id="338969.Rfer_3796"/>
<dbReference type="KEGG" id="rfr:Rfer_3796"/>
<dbReference type="eggNOG" id="COG0051">
    <property type="taxonomic scope" value="Bacteria"/>
</dbReference>
<dbReference type="HOGENOM" id="CLU_122625_1_3_4"/>
<dbReference type="OrthoDB" id="9804464at2"/>
<dbReference type="Proteomes" id="UP000008332">
    <property type="component" value="Chromosome"/>
</dbReference>
<dbReference type="GO" id="GO:1990904">
    <property type="term" value="C:ribonucleoprotein complex"/>
    <property type="evidence" value="ECO:0007669"/>
    <property type="project" value="UniProtKB-KW"/>
</dbReference>
<dbReference type="GO" id="GO:0005840">
    <property type="term" value="C:ribosome"/>
    <property type="evidence" value="ECO:0007669"/>
    <property type="project" value="UniProtKB-KW"/>
</dbReference>
<dbReference type="GO" id="GO:0003735">
    <property type="term" value="F:structural constituent of ribosome"/>
    <property type="evidence" value="ECO:0007669"/>
    <property type="project" value="InterPro"/>
</dbReference>
<dbReference type="GO" id="GO:0000049">
    <property type="term" value="F:tRNA binding"/>
    <property type="evidence" value="ECO:0007669"/>
    <property type="project" value="UniProtKB-UniRule"/>
</dbReference>
<dbReference type="GO" id="GO:0006412">
    <property type="term" value="P:translation"/>
    <property type="evidence" value="ECO:0007669"/>
    <property type="project" value="UniProtKB-UniRule"/>
</dbReference>
<dbReference type="FunFam" id="3.30.70.600:FF:000001">
    <property type="entry name" value="30S ribosomal protein S10"/>
    <property type="match status" value="1"/>
</dbReference>
<dbReference type="Gene3D" id="3.30.70.600">
    <property type="entry name" value="Ribosomal protein S10 domain"/>
    <property type="match status" value="1"/>
</dbReference>
<dbReference type="HAMAP" id="MF_00508">
    <property type="entry name" value="Ribosomal_uS10"/>
    <property type="match status" value="1"/>
</dbReference>
<dbReference type="InterPro" id="IPR001848">
    <property type="entry name" value="Ribosomal_uS10"/>
</dbReference>
<dbReference type="InterPro" id="IPR018268">
    <property type="entry name" value="Ribosomal_uS10_CS"/>
</dbReference>
<dbReference type="InterPro" id="IPR027486">
    <property type="entry name" value="Ribosomal_uS10_dom"/>
</dbReference>
<dbReference type="InterPro" id="IPR036838">
    <property type="entry name" value="Ribosomal_uS10_dom_sf"/>
</dbReference>
<dbReference type="NCBIfam" id="NF001861">
    <property type="entry name" value="PRK00596.1"/>
    <property type="match status" value="1"/>
</dbReference>
<dbReference type="NCBIfam" id="TIGR01049">
    <property type="entry name" value="rpsJ_bact"/>
    <property type="match status" value="1"/>
</dbReference>
<dbReference type="PANTHER" id="PTHR11700">
    <property type="entry name" value="30S RIBOSOMAL PROTEIN S10 FAMILY MEMBER"/>
    <property type="match status" value="1"/>
</dbReference>
<dbReference type="Pfam" id="PF00338">
    <property type="entry name" value="Ribosomal_S10"/>
    <property type="match status" value="1"/>
</dbReference>
<dbReference type="PRINTS" id="PR00971">
    <property type="entry name" value="RIBOSOMALS10"/>
</dbReference>
<dbReference type="SMART" id="SM01403">
    <property type="entry name" value="Ribosomal_S10"/>
    <property type="match status" value="1"/>
</dbReference>
<dbReference type="SUPFAM" id="SSF54999">
    <property type="entry name" value="Ribosomal protein S10"/>
    <property type="match status" value="1"/>
</dbReference>
<dbReference type="PROSITE" id="PS00361">
    <property type="entry name" value="RIBOSOMAL_S10"/>
    <property type="match status" value="1"/>
</dbReference>
<proteinExistence type="inferred from homology"/>
<evidence type="ECO:0000255" key="1">
    <source>
        <dbReference type="HAMAP-Rule" id="MF_00508"/>
    </source>
</evidence>
<evidence type="ECO:0000305" key="2"/>
<organism>
    <name type="scientific">Albidiferax ferrireducens (strain ATCC BAA-621 / DSM 15236 / T118)</name>
    <name type="common">Rhodoferax ferrireducens</name>
    <dbReference type="NCBI Taxonomy" id="338969"/>
    <lineage>
        <taxon>Bacteria</taxon>
        <taxon>Pseudomonadati</taxon>
        <taxon>Pseudomonadota</taxon>
        <taxon>Betaproteobacteria</taxon>
        <taxon>Burkholderiales</taxon>
        <taxon>Comamonadaceae</taxon>
        <taxon>Rhodoferax</taxon>
    </lineage>
</organism>
<comment type="function">
    <text evidence="1">Involved in the binding of tRNA to the ribosomes.</text>
</comment>
<comment type="subunit">
    <text evidence="1">Part of the 30S ribosomal subunit.</text>
</comment>
<comment type="similarity">
    <text evidence="1">Belongs to the universal ribosomal protein uS10 family.</text>
</comment>
<sequence length="104" mass="11884">MATKQKIRIRLKAFDYKLIDQSAAEIVDTAKRTGAIVKGPVPLPTRFKRFDILRSPHVNKTSRDQFEIRTHQRLMDIVDPTDKTVDALMKLDLPAGVDVEIKLQ</sequence>
<protein>
    <recommendedName>
        <fullName evidence="1">Small ribosomal subunit protein uS10</fullName>
    </recommendedName>
    <alternativeName>
        <fullName evidence="2">30S ribosomal protein S10</fullName>
    </alternativeName>
</protein>
<feature type="chain" id="PRO_0000258566" description="Small ribosomal subunit protein uS10">
    <location>
        <begin position="1"/>
        <end position="104"/>
    </location>
</feature>
<gene>
    <name evidence="1" type="primary">rpsJ</name>
    <name type="ordered locus">Rfer_3796</name>
</gene>
<reference key="1">
    <citation type="submission" date="2006-02" db="EMBL/GenBank/DDBJ databases">
        <title>Complete sequence of chromosome of Rhodoferax ferrireducens DSM 15236.</title>
        <authorList>
            <person name="Copeland A."/>
            <person name="Lucas S."/>
            <person name="Lapidus A."/>
            <person name="Barry K."/>
            <person name="Detter J.C."/>
            <person name="Glavina del Rio T."/>
            <person name="Hammon N."/>
            <person name="Israni S."/>
            <person name="Pitluck S."/>
            <person name="Brettin T."/>
            <person name="Bruce D."/>
            <person name="Han C."/>
            <person name="Tapia R."/>
            <person name="Gilna P."/>
            <person name="Kiss H."/>
            <person name="Schmutz J."/>
            <person name="Larimer F."/>
            <person name="Land M."/>
            <person name="Kyrpides N."/>
            <person name="Ivanova N."/>
            <person name="Richardson P."/>
        </authorList>
    </citation>
    <scope>NUCLEOTIDE SEQUENCE [LARGE SCALE GENOMIC DNA]</scope>
    <source>
        <strain>ATCC BAA-621 / DSM 15236 / T118</strain>
    </source>
</reference>
<name>RS10_ALBFT</name>
<keyword id="KW-1185">Reference proteome</keyword>
<keyword id="KW-0687">Ribonucleoprotein</keyword>
<keyword id="KW-0689">Ribosomal protein</keyword>